<proteinExistence type="inferred from homology"/>
<name>Y411_MYCPN</name>
<feature type="signal peptide" evidence="1">
    <location>
        <begin position="1"/>
        <end position="25"/>
    </location>
</feature>
<feature type="chain" id="PRO_0000014058" description="Uncharacterized lipoprotein MPN_411">
    <location>
        <begin position="26"/>
        <end position="252"/>
    </location>
</feature>
<feature type="lipid moiety-binding region" description="N-palmitoyl cysteine" evidence="1">
    <location>
        <position position="26"/>
    </location>
</feature>
<feature type="lipid moiety-binding region" description="S-diacylglycerol cysteine" evidence="1">
    <location>
        <position position="26"/>
    </location>
</feature>
<protein>
    <recommendedName>
        <fullName>Uncharacterized lipoprotein MPN_411</fullName>
    </recommendedName>
</protein>
<sequence length="252" mass="29196">MRKKKFLSRFAFGSLFLLCGTILSACTGIQADLRNLIKEATGKDIDLSKSIKTTDGKKNIITSSKKSYEVNPKDTTKLLLEAWKQSFEEGKLGIAELAFDQATNPTKNSDFKMERKVEYFNMEYKSFSDFSVNARLSYIFNWYGSYFGEKSFTANNGGKHNFDLFLSIKSHSKKQFTEKSFIVKDENFQDQDKSQQIITEWIQLDLSLIWSLKGQDELSRKSLDKIFLKDYITYSANEKQINLFTYLQHLIK</sequence>
<gene>
    <name type="ordered locus">MPN_411</name>
    <name type="ORF">A05_orf252</name>
    <name type="ORF">MP427</name>
</gene>
<evidence type="ECO:0000255" key="1">
    <source>
        <dbReference type="PROSITE-ProRule" id="PRU00303"/>
    </source>
</evidence>
<evidence type="ECO:0000305" key="2"/>
<accession>P75373</accession>
<keyword id="KW-1003">Cell membrane</keyword>
<keyword id="KW-0449">Lipoprotein</keyword>
<keyword id="KW-0472">Membrane</keyword>
<keyword id="KW-0564">Palmitate</keyword>
<keyword id="KW-1185">Reference proteome</keyword>
<keyword id="KW-0732">Signal</keyword>
<reference key="1">
    <citation type="journal article" date="1996" name="Nucleic Acids Res.">
        <title>Complete sequence analysis of the genome of the bacterium Mycoplasma pneumoniae.</title>
        <authorList>
            <person name="Himmelreich R."/>
            <person name="Hilbert H."/>
            <person name="Plagens H."/>
            <person name="Pirkl E."/>
            <person name="Li B.-C."/>
            <person name="Herrmann R."/>
        </authorList>
    </citation>
    <scope>NUCLEOTIDE SEQUENCE [LARGE SCALE GENOMIC DNA]</scope>
    <source>
        <strain>ATCC 29342 / M129 / Subtype 1</strain>
    </source>
</reference>
<comment type="subcellular location">
    <subcellularLocation>
        <location evidence="1">Cell membrane</location>
        <topology evidence="1">Lipid-anchor</topology>
    </subcellularLocation>
</comment>
<comment type="similarity">
    <text evidence="2">Belongs to the MG439/MG440 family.</text>
</comment>
<organism>
    <name type="scientific">Mycoplasma pneumoniae (strain ATCC 29342 / M129 / Subtype 1)</name>
    <name type="common">Mycoplasmoides pneumoniae</name>
    <dbReference type="NCBI Taxonomy" id="272634"/>
    <lineage>
        <taxon>Bacteria</taxon>
        <taxon>Bacillati</taxon>
        <taxon>Mycoplasmatota</taxon>
        <taxon>Mycoplasmoidales</taxon>
        <taxon>Mycoplasmoidaceae</taxon>
        <taxon>Mycoplasmoides</taxon>
    </lineage>
</organism>
<dbReference type="EMBL" id="U00089">
    <property type="protein sequence ID" value="AAB96075.1"/>
    <property type="molecule type" value="Genomic_DNA"/>
</dbReference>
<dbReference type="PIR" id="S73753">
    <property type="entry name" value="S73753"/>
</dbReference>
<dbReference type="RefSeq" id="NP_110099.1">
    <property type="nucleotide sequence ID" value="NC_000912.1"/>
</dbReference>
<dbReference type="RefSeq" id="WP_010874767.1">
    <property type="nucleotide sequence ID" value="NZ_OU342337.1"/>
</dbReference>
<dbReference type="STRING" id="272634.MPN_411"/>
<dbReference type="EnsemblBacteria" id="AAB96075">
    <property type="protein sequence ID" value="AAB96075"/>
    <property type="gene ID" value="MPN_411"/>
</dbReference>
<dbReference type="KEGG" id="mpn:MPN_411"/>
<dbReference type="PATRIC" id="fig|272634.6.peg.446"/>
<dbReference type="HOGENOM" id="CLU_1198717_0_0_14"/>
<dbReference type="BioCyc" id="MPNE272634:G1GJ3-666-MONOMER"/>
<dbReference type="Proteomes" id="UP000000808">
    <property type="component" value="Chromosome"/>
</dbReference>
<dbReference type="GO" id="GO:0005886">
    <property type="term" value="C:plasma membrane"/>
    <property type="evidence" value="ECO:0007669"/>
    <property type="project" value="UniProtKB-SubCell"/>
</dbReference>
<dbReference type="InterPro" id="IPR001595">
    <property type="entry name" value="Lipoprotein_3"/>
</dbReference>
<dbReference type="Pfam" id="PF00938">
    <property type="entry name" value="Lipoprotein_3"/>
    <property type="match status" value="1"/>
</dbReference>
<dbReference type="PROSITE" id="PS51257">
    <property type="entry name" value="PROKAR_LIPOPROTEIN"/>
    <property type="match status" value="1"/>
</dbReference>